<dbReference type="EMBL" id="AB026658">
    <property type="protein sequence ID" value="BAB01099.1"/>
    <property type="molecule type" value="Genomic_DNA"/>
</dbReference>
<dbReference type="EMBL" id="CP002686">
    <property type="protein sequence ID" value="AEE76083.1"/>
    <property type="molecule type" value="Genomic_DNA"/>
</dbReference>
<dbReference type="RefSeq" id="NP_188462.1">
    <property type="nucleotide sequence ID" value="NM_112718.2"/>
</dbReference>
<dbReference type="PaxDb" id="3702-AT3G18330.1"/>
<dbReference type="EnsemblPlants" id="AT3G18330.1">
    <property type="protein sequence ID" value="AT3G18330.1"/>
    <property type="gene ID" value="AT3G18330"/>
</dbReference>
<dbReference type="GeneID" id="821362"/>
<dbReference type="Gramene" id="AT3G18330.1">
    <property type="protein sequence ID" value="AT3G18330.1"/>
    <property type="gene ID" value="AT3G18330"/>
</dbReference>
<dbReference type="KEGG" id="ath:AT3G18330"/>
<dbReference type="Araport" id="AT3G18330"/>
<dbReference type="TAIR" id="AT3G18330"/>
<dbReference type="HOGENOM" id="CLU_034692_0_0_1"/>
<dbReference type="InParanoid" id="Q9LS57"/>
<dbReference type="OMA" id="TGETKWI"/>
<dbReference type="PhylomeDB" id="Q9LS57"/>
<dbReference type="PRO" id="PR:Q9LS57"/>
<dbReference type="Proteomes" id="UP000006548">
    <property type="component" value="Chromosome 3"/>
</dbReference>
<dbReference type="ExpressionAtlas" id="Q9LS57">
    <property type="expression patterns" value="baseline and differential"/>
</dbReference>
<dbReference type="CDD" id="cd22157">
    <property type="entry name" value="F-box_AtFBW1-like"/>
    <property type="match status" value="1"/>
</dbReference>
<dbReference type="Gene3D" id="1.20.1280.50">
    <property type="match status" value="1"/>
</dbReference>
<dbReference type="InterPro" id="IPR006527">
    <property type="entry name" value="F-box-assoc_dom_typ1"/>
</dbReference>
<dbReference type="InterPro" id="IPR017451">
    <property type="entry name" value="F-box-assoc_interact_dom"/>
</dbReference>
<dbReference type="InterPro" id="IPR036047">
    <property type="entry name" value="F-box-like_dom_sf"/>
</dbReference>
<dbReference type="InterPro" id="IPR001810">
    <property type="entry name" value="F-box_dom"/>
</dbReference>
<dbReference type="InterPro" id="IPR011043">
    <property type="entry name" value="Gal_Oxase/kelch_b-propeller"/>
</dbReference>
<dbReference type="InterPro" id="IPR050796">
    <property type="entry name" value="SCF_F-box_component"/>
</dbReference>
<dbReference type="NCBIfam" id="TIGR01640">
    <property type="entry name" value="F_box_assoc_1"/>
    <property type="match status" value="1"/>
</dbReference>
<dbReference type="PANTHER" id="PTHR31672">
    <property type="entry name" value="BNACNNG10540D PROTEIN"/>
    <property type="match status" value="1"/>
</dbReference>
<dbReference type="PANTHER" id="PTHR31672:SF13">
    <property type="entry name" value="F-BOX PROTEIN CPR30-LIKE"/>
    <property type="match status" value="1"/>
</dbReference>
<dbReference type="Pfam" id="PF00646">
    <property type="entry name" value="F-box"/>
    <property type="match status" value="1"/>
</dbReference>
<dbReference type="Pfam" id="PF07734">
    <property type="entry name" value="FBA_1"/>
    <property type="match status" value="1"/>
</dbReference>
<dbReference type="SMART" id="SM00256">
    <property type="entry name" value="FBOX"/>
    <property type="match status" value="1"/>
</dbReference>
<dbReference type="SUPFAM" id="SSF81383">
    <property type="entry name" value="F-box domain"/>
    <property type="match status" value="1"/>
</dbReference>
<dbReference type="SUPFAM" id="SSF50965">
    <property type="entry name" value="Galactose oxidase, central domain"/>
    <property type="match status" value="1"/>
</dbReference>
<dbReference type="PROSITE" id="PS50181">
    <property type="entry name" value="FBOX"/>
    <property type="match status" value="1"/>
</dbReference>
<feature type="chain" id="PRO_0000283429" description="Putative F-box protein At3g18330">
    <location>
        <begin position="1"/>
        <end position="376"/>
    </location>
</feature>
<feature type="domain" description="F-box" evidence="1">
    <location>
        <begin position="1"/>
        <end position="46"/>
    </location>
</feature>
<evidence type="ECO:0000255" key="1">
    <source>
        <dbReference type="PROSITE-ProRule" id="PRU00080"/>
    </source>
</evidence>
<gene>
    <name type="ordered locus">At3g18330</name>
    <name type="ORF">MYF24.5</name>
</gene>
<keyword id="KW-1185">Reference proteome</keyword>
<organism>
    <name type="scientific">Arabidopsis thaliana</name>
    <name type="common">Mouse-ear cress</name>
    <dbReference type="NCBI Taxonomy" id="3702"/>
    <lineage>
        <taxon>Eukaryota</taxon>
        <taxon>Viridiplantae</taxon>
        <taxon>Streptophyta</taxon>
        <taxon>Embryophyta</taxon>
        <taxon>Tracheophyta</taxon>
        <taxon>Spermatophyta</taxon>
        <taxon>Magnoliopsida</taxon>
        <taxon>eudicotyledons</taxon>
        <taxon>Gunneridae</taxon>
        <taxon>Pentapetalae</taxon>
        <taxon>rosids</taxon>
        <taxon>malvids</taxon>
        <taxon>Brassicales</taxon>
        <taxon>Brassicaceae</taxon>
        <taxon>Camelineae</taxon>
        <taxon>Arabidopsis</taxon>
    </lineage>
</organism>
<reference key="1">
    <citation type="journal article" date="2000" name="DNA Res.">
        <title>Structural analysis of Arabidopsis thaliana chromosome 3. I. Sequence features of the regions of 4,504,864 bp covered by sixty P1 and TAC clones.</title>
        <authorList>
            <person name="Sato S."/>
            <person name="Nakamura Y."/>
            <person name="Kaneko T."/>
            <person name="Katoh T."/>
            <person name="Asamizu E."/>
            <person name="Tabata S."/>
        </authorList>
    </citation>
    <scope>NUCLEOTIDE SEQUENCE [LARGE SCALE GENOMIC DNA]</scope>
    <source>
        <strain>cv. Columbia</strain>
    </source>
</reference>
<reference key="2">
    <citation type="journal article" date="2017" name="Plant J.">
        <title>Araport11: a complete reannotation of the Arabidopsis thaliana reference genome.</title>
        <authorList>
            <person name="Cheng C.Y."/>
            <person name="Krishnakumar V."/>
            <person name="Chan A.P."/>
            <person name="Thibaud-Nissen F."/>
            <person name="Schobel S."/>
            <person name="Town C.D."/>
        </authorList>
    </citation>
    <scope>GENOME REANNOTATION</scope>
    <source>
        <strain>cv. Columbia</strain>
    </source>
</reference>
<name>FB159_ARATH</name>
<sequence length="376" mass="43314">MPMPNLPKELVEEILSFVPATYLKRLSATCKPWNRLIHNDKRFARKHYDNAAKEFLVFMMRKNFRIIRRGVNLHGADPSAEVKGELTLPDPYFKNSADEFHIDRVFHCDGLLLCTSKLERRMVVWNPLTGETKWIQTHEEGDNFFLGYSQEDKNISCKKSYKIMGFYRSGSKVWEYDFNSDSWRVLNGILPNWYFDKSYKCVSLKGNTYMLAGAVTDMGFDLSLQSYDFSTEKFAPVSLPVPSQARSLNGANRLSVVRGEKLALLYRRDKRSKAEIWVTNKIDDTTEGAVSWTKVLELDLSRELHALFTSNFLVDEEKKVFICCVSWKEDEDENKSNKVYIVGEDNIVKEIDSGEDATSGCEPTILSLYVPSLVYM</sequence>
<accession>Q9LS57</accession>
<proteinExistence type="predicted"/>
<protein>
    <recommendedName>
        <fullName>Putative F-box protein At3g18330</fullName>
    </recommendedName>
</protein>